<gene>
    <name evidence="5" type="primary">DCDC2C</name>
</gene>
<feature type="chain" id="PRO_0000344449" description="Doublecortin domain-containing protein 2C">
    <location>
        <begin position="1"/>
        <end position="364"/>
    </location>
</feature>
<feature type="domain" description="Doublecortin 1" evidence="1">
    <location>
        <begin position="16"/>
        <end position="98"/>
    </location>
</feature>
<feature type="domain" description="Doublecortin 2" evidence="1">
    <location>
        <begin position="136"/>
        <end position="217"/>
    </location>
</feature>
<feature type="region of interest" description="Disordered" evidence="2">
    <location>
        <begin position="233"/>
        <end position="255"/>
    </location>
</feature>
<organism>
    <name type="scientific">Homo sapiens</name>
    <name type="common">Human</name>
    <dbReference type="NCBI Taxonomy" id="9606"/>
    <lineage>
        <taxon>Eukaryota</taxon>
        <taxon>Metazoa</taxon>
        <taxon>Chordata</taxon>
        <taxon>Craniata</taxon>
        <taxon>Vertebrata</taxon>
        <taxon>Euteleostomi</taxon>
        <taxon>Mammalia</taxon>
        <taxon>Eutheria</taxon>
        <taxon>Euarchontoglires</taxon>
        <taxon>Primates</taxon>
        <taxon>Haplorrhini</taxon>
        <taxon>Catarrhini</taxon>
        <taxon>Hominidae</taxon>
        <taxon>Homo</taxon>
    </lineage>
</organism>
<protein>
    <recommendedName>
        <fullName evidence="4">Doublecortin domain-containing protein 2C</fullName>
    </recommendedName>
</protein>
<dbReference type="EMBL" id="AC010907">
    <property type="status" value="NOT_ANNOTATED_CDS"/>
    <property type="molecule type" value="Genomic_DNA"/>
</dbReference>
<dbReference type="EMBL" id="AC019172">
    <property type="status" value="NOT_ANNOTATED_CDS"/>
    <property type="molecule type" value="Genomic_DNA"/>
</dbReference>
<dbReference type="CCDS" id="CCDS74481.1"/>
<dbReference type="RefSeq" id="NP_001274373.1">
    <property type="nucleotide sequence ID" value="NM_001287444.2"/>
</dbReference>
<dbReference type="SMR" id="A8MYV0"/>
<dbReference type="FunCoup" id="A8MYV0">
    <property type="interactions" value="3"/>
</dbReference>
<dbReference type="IntAct" id="A8MYV0">
    <property type="interactions" value="1"/>
</dbReference>
<dbReference type="STRING" id="9606.ENSP00000382097"/>
<dbReference type="GlyGen" id="A8MYV0">
    <property type="glycosylation" value="1 site"/>
</dbReference>
<dbReference type="iPTMnet" id="A8MYV0"/>
<dbReference type="PhosphoSitePlus" id="A8MYV0"/>
<dbReference type="BioMuta" id="DCDC2C"/>
<dbReference type="MassIVE" id="A8MYV0"/>
<dbReference type="PaxDb" id="9606-ENSP00000382097"/>
<dbReference type="PeptideAtlas" id="A8MYV0"/>
<dbReference type="ProteomicsDB" id="2428"/>
<dbReference type="Antibodypedia" id="50948">
    <property type="antibodies" value="8 antibodies from 7 providers"/>
</dbReference>
<dbReference type="DNASU" id="728597"/>
<dbReference type="Ensembl" id="ENST00000399143.9">
    <property type="protein sequence ID" value="ENSP00000382097.4"/>
    <property type="gene ID" value="ENSG00000214866.9"/>
</dbReference>
<dbReference type="GeneID" id="728597"/>
<dbReference type="KEGG" id="hsa:728597"/>
<dbReference type="MANE-Select" id="ENST00000399143.9">
    <property type="protein sequence ID" value="ENSP00000382097.4"/>
    <property type="RefSeq nucleotide sequence ID" value="NM_001287444.2"/>
    <property type="RefSeq protein sequence ID" value="NP_001274373.1"/>
</dbReference>
<dbReference type="UCSC" id="uc032nde.2">
    <property type="organism name" value="human"/>
</dbReference>
<dbReference type="AGR" id="HGNC:32696"/>
<dbReference type="CTD" id="728597"/>
<dbReference type="DisGeNET" id="728597"/>
<dbReference type="GeneCards" id="DCDC2C"/>
<dbReference type="HGNC" id="HGNC:32696">
    <property type="gene designation" value="DCDC2C"/>
</dbReference>
<dbReference type="HPA" id="ENSG00000214866">
    <property type="expression patterns" value="Group enriched (choroid plexus, testis)"/>
</dbReference>
<dbReference type="neXtProt" id="NX_A8MYV0"/>
<dbReference type="OpenTargets" id="ENSG00000214866"/>
<dbReference type="VEuPathDB" id="HostDB:ENSG00000214866"/>
<dbReference type="eggNOG" id="KOG3757">
    <property type="taxonomic scope" value="Eukaryota"/>
</dbReference>
<dbReference type="GeneTree" id="ENSGT00940000162396"/>
<dbReference type="InParanoid" id="A8MYV0"/>
<dbReference type="OMA" id="CKYDGIP"/>
<dbReference type="OrthoDB" id="1738954at2759"/>
<dbReference type="PAN-GO" id="A8MYV0">
    <property type="GO annotations" value="2 GO annotations based on evolutionary models"/>
</dbReference>
<dbReference type="PhylomeDB" id="A8MYV0"/>
<dbReference type="SignaLink" id="A8MYV0"/>
<dbReference type="ChiTaRS" id="DCDC2C">
    <property type="organism name" value="human"/>
</dbReference>
<dbReference type="Pharos" id="A8MYV0">
    <property type="development level" value="Tdark"/>
</dbReference>
<dbReference type="PRO" id="PR:A8MYV0"/>
<dbReference type="Proteomes" id="UP000005640">
    <property type="component" value="Chromosome 2"/>
</dbReference>
<dbReference type="RNAct" id="A8MYV0">
    <property type="molecule type" value="protein"/>
</dbReference>
<dbReference type="Bgee" id="ENSG00000214866">
    <property type="expression patterns" value="Expressed in sural nerve and 81 other cell types or tissues"/>
</dbReference>
<dbReference type="GO" id="GO:0005737">
    <property type="term" value="C:cytoplasm"/>
    <property type="evidence" value="ECO:0000314"/>
    <property type="project" value="UniProtKB"/>
</dbReference>
<dbReference type="GO" id="GO:0005874">
    <property type="term" value="C:microtubule"/>
    <property type="evidence" value="ECO:0000318"/>
    <property type="project" value="GO_Central"/>
</dbReference>
<dbReference type="GO" id="GO:0005815">
    <property type="term" value="C:microtubule organizing center"/>
    <property type="evidence" value="ECO:0000318"/>
    <property type="project" value="GO_Central"/>
</dbReference>
<dbReference type="GO" id="GO:0036126">
    <property type="term" value="C:sperm flagellum"/>
    <property type="evidence" value="ECO:0000314"/>
    <property type="project" value="UniProtKB"/>
</dbReference>
<dbReference type="GO" id="GO:0035556">
    <property type="term" value="P:intracellular signal transduction"/>
    <property type="evidence" value="ECO:0007669"/>
    <property type="project" value="InterPro"/>
</dbReference>
<dbReference type="CDD" id="cd17151">
    <property type="entry name" value="DCX1_DCDC2C"/>
    <property type="match status" value="1"/>
</dbReference>
<dbReference type="CDD" id="cd17154">
    <property type="entry name" value="DCX2_DCDC2C"/>
    <property type="match status" value="1"/>
</dbReference>
<dbReference type="FunFam" id="3.10.20.230:FF:000012">
    <property type="entry name" value="Doublecortin domain containing 2C"/>
    <property type="match status" value="1"/>
</dbReference>
<dbReference type="FunFam" id="3.10.20.230:FF:000015">
    <property type="entry name" value="Doublecortin domain containing 2C"/>
    <property type="match status" value="1"/>
</dbReference>
<dbReference type="Gene3D" id="3.10.20.230">
    <property type="entry name" value="Doublecortin domain"/>
    <property type="match status" value="2"/>
</dbReference>
<dbReference type="InterPro" id="IPR003533">
    <property type="entry name" value="Doublecortin_dom"/>
</dbReference>
<dbReference type="InterPro" id="IPR036572">
    <property type="entry name" value="Doublecortin_dom_sf"/>
</dbReference>
<dbReference type="PANTHER" id="PTHR23004">
    <property type="entry name" value="DOUBLECORTIN DOMAIN CONTAINING 2"/>
    <property type="match status" value="1"/>
</dbReference>
<dbReference type="PANTHER" id="PTHR23004:SF9">
    <property type="entry name" value="DOUBLECORTIN DOMAIN-CONTAINING PROTEIN 2C"/>
    <property type="match status" value="1"/>
</dbReference>
<dbReference type="Pfam" id="PF03607">
    <property type="entry name" value="DCX"/>
    <property type="match status" value="2"/>
</dbReference>
<dbReference type="SMART" id="SM00537">
    <property type="entry name" value="DCX"/>
    <property type="match status" value="2"/>
</dbReference>
<dbReference type="SUPFAM" id="SSF89837">
    <property type="entry name" value="Doublecortin (DC)"/>
    <property type="match status" value="2"/>
</dbReference>
<dbReference type="PROSITE" id="PS50309">
    <property type="entry name" value="DC"/>
    <property type="match status" value="2"/>
</dbReference>
<sequence>MGTRGPSAPVDTTPAKTIVVYRNGDPFYVGKKFVLSRRRAATFEALLEQLTEQVDVPFGVRRLFTPTRGHRVLGLDALQAGGKYVAAGRERFKELDYIHIVPRKPAKIRKLKEIKPVVHCDINVPSKWQTYHRISRHINVFTNGRLFIPPAKIIIPKFSLSDWDIVLATIGEKVFPLGGVRKLFTMNGHLLGDSKDLQDNHFYVAVGLETFKYFPYWKSPRVPSEVQQRYANVEKNSQRKKKVDSKGKEPCKYDGIPPKTQDSVYYAKEEKKKTLAEPLVQRGAEGDVYKAPTPSKETQGALDVKEEHNVQLEVPVDQRQAEIVKEDEEIHENTPDFEGNKDKEDARLCEDVERKMAREWKPVD</sequence>
<evidence type="ECO:0000255" key="1">
    <source>
        <dbReference type="PROSITE-ProRule" id="PRU00072"/>
    </source>
</evidence>
<evidence type="ECO:0000256" key="2">
    <source>
        <dbReference type="SAM" id="MobiDB-lite"/>
    </source>
</evidence>
<evidence type="ECO:0000269" key="3">
    <source>
    </source>
</evidence>
<evidence type="ECO:0000305" key="4"/>
<evidence type="ECO:0000312" key="5">
    <source>
        <dbReference type="HGNC" id="HGNC:32696"/>
    </source>
</evidence>
<proteinExistence type="evidence at protein level"/>
<comment type="subcellular location">
    <subcellularLocation>
        <location evidence="3">Cell projection</location>
        <location evidence="3">Cilium</location>
        <location evidence="3">Flagellum</location>
    </subcellularLocation>
    <subcellularLocation>
        <location evidence="3">Cytoplasm</location>
    </subcellularLocation>
    <text evidence="3">Detected along the length of the sperm flagellum and in the cytoplasm of the germ cells.</text>
</comment>
<comment type="tissue specificity">
    <text evidence="3">Expressed in testis and spermatozoa (at protein level).</text>
</comment>
<keyword id="KW-0966">Cell projection</keyword>
<keyword id="KW-0969">Cilium</keyword>
<keyword id="KW-0963">Cytoplasm</keyword>
<keyword id="KW-0282">Flagellum</keyword>
<keyword id="KW-1267">Proteomics identification</keyword>
<keyword id="KW-1185">Reference proteome</keyword>
<keyword id="KW-0677">Repeat</keyword>
<name>DCD2C_HUMAN</name>
<accession>A8MYV0</accession>
<reference key="1">
    <citation type="journal article" date="2005" name="Nature">
        <title>Generation and annotation of the DNA sequences of human chromosomes 2 and 4.</title>
        <authorList>
            <person name="Hillier L.W."/>
            <person name="Graves T.A."/>
            <person name="Fulton R.S."/>
            <person name="Fulton L.A."/>
            <person name="Pepin K.H."/>
            <person name="Minx P."/>
            <person name="Wagner-McPherson C."/>
            <person name="Layman D."/>
            <person name="Wylie K."/>
            <person name="Sekhon M."/>
            <person name="Becker M.C."/>
            <person name="Fewell G.A."/>
            <person name="Delehaunty K.D."/>
            <person name="Miner T.L."/>
            <person name="Nash W.E."/>
            <person name="Kremitzki C."/>
            <person name="Oddy L."/>
            <person name="Du H."/>
            <person name="Sun H."/>
            <person name="Bradshaw-Cordum H."/>
            <person name="Ali J."/>
            <person name="Carter J."/>
            <person name="Cordes M."/>
            <person name="Harris A."/>
            <person name="Isak A."/>
            <person name="van Brunt A."/>
            <person name="Nguyen C."/>
            <person name="Du F."/>
            <person name="Courtney L."/>
            <person name="Kalicki J."/>
            <person name="Ozersky P."/>
            <person name="Abbott S."/>
            <person name="Armstrong J."/>
            <person name="Belter E.A."/>
            <person name="Caruso L."/>
            <person name="Cedroni M."/>
            <person name="Cotton M."/>
            <person name="Davidson T."/>
            <person name="Desai A."/>
            <person name="Elliott G."/>
            <person name="Erb T."/>
            <person name="Fronick C."/>
            <person name="Gaige T."/>
            <person name="Haakenson W."/>
            <person name="Haglund K."/>
            <person name="Holmes A."/>
            <person name="Harkins R."/>
            <person name="Kim K."/>
            <person name="Kruchowski S.S."/>
            <person name="Strong C.M."/>
            <person name="Grewal N."/>
            <person name="Goyea E."/>
            <person name="Hou S."/>
            <person name="Levy A."/>
            <person name="Martinka S."/>
            <person name="Mead K."/>
            <person name="McLellan M.D."/>
            <person name="Meyer R."/>
            <person name="Randall-Maher J."/>
            <person name="Tomlinson C."/>
            <person name="Dauphin-Kohlberg S."/>
            <person name="Kozlowicz-Reilly A."/>
            <person name="Shah N."/>
            <person name="Swearengen-Shahid S."/>
            <person name="Snider J."/>
            <person name="Strong J.T."/>
            <person name="Thompson J."/>
            <person name="Yoakum M."/>
            <person name="Leonard S."/>
            <person name="Pearman C."/>
            <person name="Trani L."/>
            <person name="Radionenko M."/>
            <person name="Waligorski J.E."/>
            <person name="Wang C."/>
            <person name="Rock S.M."/>
            <person name="Tin-Wollam A.-M."/>
            <person name="Maupin R."/>
            <person name="Latreille P."/>
            <person name="Wendl M.C."/>
            <person name="Yang S.-P."/>
            <person name="Pohl C."/>
            <person name="Wallis J.W."/>
            <person name="Spieth J."/>
            <person name="Bieri T.A."/>
            <person name="Berkowicz N."/>
            <person name="Nelson J.O."/>
            <person name="Osborne J."/>
            <person name="Ding L."/>
            <person name="Meyer R."/>
            <person name="Sabo A."/>
            <person name="Shotland Y."/>
            <person name="Sinha P."/>
            <person name="Wohldmann P.E."/>
            <person name="Cook L.L."/>
            <person name="Hickenbotham M.T."/>
            <person name="Eldred J."/>
            <person name="Williams D."/>
            <person name="Jones T.A."/>
            <person name="She X."/>
            <person name="Ciccarelli F.D."/>
            <person name="Izaurralde E."/>
            <person name="Taylor J."/>
            <person name="Schmutz J."/>
            <person name="Myers R.M."/>
            <person name="Cox D.R."/>
            <person name="Huang X."/>
            <person name="McPherson J.D."/>
            <person name="Mardis E.R."/>
            <person name="Clifton S.W."/>
            <person name="Warren W.C."/>
            <person name="Chinwalla A.T."/>
            <person name="Eddy S.R."/>
            <person name="Marra M.A."/>
            <person name="Ovcharenko I."/>
            <person name="Furey T.S."/>
            <person name="Miller W."/>
            <person name="Eichler E.E."/>
            <person name="Bork P."/>
            <person name="Suyama M."/>
            <person name="Torrents D."/>
            <person name="Waterston R.H."/>
            <person name="Wilson R.K."/>
        </authorList>
    </citation>
    <scope>NUCLEOTIDE SEQUENCE [LARGE SCALE GENOMIC DNA]</scope>
</reference>
<reference key="2">
    <citation type="journal article" date="2017" name="Biol. Reprod.">
        <title>Defining the human sperm microtubulome: an integrated genomics approach.</title>
        <authorList>
            <person name="Jumeau F."/>
            <person name="Chalmel F."/>
            <person name="Fernandez-Gomez F.J."/>
            <person name="Carpentier C."/>
            <person name="Obriot H."/>
            <person name="Tardivel M."/>
            <person name="Caillet-Boudin M.L."/>
            <person name="Rigot J.M."/>
            <person name="Rives N."/>
            <person name="Buee L."/>
            <person name="Sergeant N."/>
            <person name="Mitchell V."/>
        </authorList>
    </citation>
    <scope>SUBCELLULAR LOCATION</scope>
    <scope>TISSUE SPECIFICITY</scope>
</reference>